<feature type="signal peptide" evidence="1">
    <location>
        <begin position="1"/>
        <end position="21"/>
    </location>
</feature>
<feature type="chain" id="PRO_5010101717" description="T cell receptor beta variable 5-5" evidence="1">
    <location>
        <begin position="22"/>
        <end position="114"/>
    </location>
</feature>
<feature type="domain" description="Ig-like" evidence="2">
    <location>
        <begin position="22"/>
        <end position="114" status="greater than"/>
    </location>
</feature>
<feature type="glycosylation site" description="N-linked (GlcNAc...) asparagine" evidence="1">
    <location>
        <position position="90"/>
    </location>
</feature>
<feature type="disulfide bond" evidence="2">
    <location>
        <begin position="42"/>
        <end position="110"/>
    </location>
</feature>
<feature type="non-terminal residue">
    <location>
        <position position="114"/>
    </location>
</feature>
<organism>
    <name type="scientific">Homo sapiens</name>
    <name type="common">Human</name>
    <dbReference type="NCBI Taxonomy" id="9606"/>
    <lineage>
        <taxon>Eukaryota</taxon>
        <taxon>Metazoa</taxon>
        <taxon>Chordata</taxon>
        <taxon>Craniata</taxon>
        <taxon>Vertebrata</taxon>
        <taxon>Euteleostomi</taxon>
        <taxon>Mammalia</taxon>
        <taxon>Eutheria</taxon>
        <taxon>Euarchontoglires</taxon>
        <taxon>Primates</taxon>
        <taxon>Haplorrhini</taxon>
        <taxon>Catarrhini</taxon>
        <taxon>Hominidae</taxon>
        <taxon>Homo</taxon>
    </lineage>
</organism>
<keyword id="KW-1064">Adaptive immunity</keyword>
<keyword id="KW-1003">Cell membrane</keyword>
<keyword id="KW-1015">Disulfide bond</keyword>
<keyword id="KW-0325">Glycoprotein</keyword>
<keyword id="KW-0391">Immunity</keyword>
<keyword id="KW-0393">Immunoglobulin domain</keyword>
<keyword id="KW-0472">Membrane</keyword>
<keyword id="KW-0675">Receptor</keyword>
<keyword id="KW-1185">Reference proteome</keyword>
<keyword id="KW-0732">Signal</keyword>
<keyword id="KW-1279">T cell receptor</keyword>
<sequence length="114" mass="12550">MGPGLLCWVLLCLLGAGPVDAGVTQSPTHLIKTRGQQVTLRCSPISGHKSVSWYQQVLGQGPQFIFQYYEKEERGRGNFPDRFSARQFPNYSSELNVNALLLGDSALYLCASSL</sequence>
<accession>A0A597</accession>
<accession>A0A075B6M3</accession>
<protein>
    <recommendedName>
        <fullName evidence="9">T cell receptor beta variable 5-5</fullName>
    </recommendedName>
</protein>
<evidence type="ECO:0000255" key="1"/>
<evidence type="ECO:0000255" key="2">
    <source>
        <dbReference type="PROSITE-ProRule" id="PRU00114"/>
    </source>
</evidence>
<evidence type="ECO:0000303" key="3">
    <source>
    </source>
</evidence>
<evidence type="ECO:0000303" key="4">
    <source>
    </source>
</evidence>
<evidence type="ECO:0000303" key="5">
    <source>
    </source>
</evidence>
<evidence type="ECO:0000303" key="6">
    <source>
    </source>
</evidence>
<evidence type="ECO:0000303" key="7">
    <source>
    </source>
</evidence>
<evidence type="ECO:0000303" key="8">
    <source>
    </source>
</evidence>
<evidence type="ECO:0000303" key="9">
    <source ref="3"/>
</evidence>
<evidence type="ECO:0000305" key="10"/>
<gene>
    <name evidence="9" type="primary">TRBV5-5</name>
    <name evidence="8" type="synonym">TCRBV5S3A2T</name>
</gene>
<reference key="1">
    <citation type="journal article" date="1996" name="Science">
        <title>The complete 685-kilobase DNA sequence of the human beta T cell receptor locus.</title>
        <authorList>
            <person name="Rowen L."/>
            <person name="Koop B.F."/>
            <person name="Hood L."/>
        </authorList>
    </citation>
    <scope>NUCLEOTIDE SEQUENCE [GENOMIC DNA] (IMGT ALLELE TRBV5-5*01)</scope>
</reference>
<reference key="2">
    <citation type="journal article" date="2003" name="Nature">
        <title>The DNA sequence of human chromosome 7.</title>
        <authorList>
            <person name="Hillier L.W."/>
            <person name="Fulton R.S."/>
            <person name="Fulton L.A."/>
            <person name="Graves T.A."/>
            <person name="Pepin K.H."/>
            <person name="Wagner-McPherson C."/>
            <person name="Layman D."/>
            <person name="Maas J."/>
            <person name="Jaeger S."/>
            <person name="Walker R."/>
            <person name="Wylie K."/>
            <person name="Sekhon M."/>
            <person name="Becker M.C."/>
            <person name="O'Laughlin M.D."/>
            <person name="Schaller M.E."/>
            <person name="Fewell G.A."/>
            <person name="Delehaunty K.D."/>
            <person name="Miner T.L."/>
            <person name="Nash W.E."/>
            <person name="Cordes M."/>
            <person name="Du H."/>
            <person name="Sun H."/>
            <person name="Edwards J."/>
            <person name="Bradshaw-Cordum H."/>
            <person name="Ali J."/>
            <person name="Andrews S."/>
            <person name="Isak A."/>
            <person name="Vanbrunt A."/>
            <person name="Nguyen C."/>
            <person name="Du F."/>
            <person name="Lamar B."/>
            <person name="Courtney L."/>
            <person name="Kalicki J."/>
            <person name="Ozersky P."/>
            <person name="Bielicki L."/>
            <person name="Scott K."/>
            <person name="Holmes A."/>
            <person name="Harkins R."/>
            <person name="Harris A."/>
            <person name="Strong C.M."/>
            <person name="Hou S."/>
            <person name="Tomlinson C."/>
            <person name="Dauphin-Kohlberg S."/>
            <person name="Kozlowicz-Reilly A."/>
            <person name="Leonard S."/>
            <person name="Rohlfing T."/>
            <person name="Rock S.M."/>
            <person name="Tin-Wollam A.-M."/>
            <person name="Abbott A."/>
            <person name="Minx P."/>
            <person name="Maupin R."/>
            <person name="Strowmatt C."/>
            <person name="Latreille P."/>
            <person name="Miller N."/>
            <person name="Johnson D."/>
            <person name="Murray J."/>
            <person name="Woessner J.P."/>
            <person name="Wendl M.C."/>
            <person name="Yang S.-P."/>
            <person name="Schultz B.R."/>
            <person name="Wallis J.W."/>
            <person name="Spieth J."/>
            <person name="Bieri T.A."/>
            <person name="Nelson J.O."/>
            <person name="Berkowicz N."/>
            <person name="Wohldmann P.E."/>
            <person name="Cook L.L."/>
            <person name="Hickenbotham M.T."/>
            <person name="Eldred J."/>
            <person name="Williams D."/>
            <person name="Bedell J.A."/>
            <person name="Mardis E.R."/>
            <person name="Clifton S.W."/>
            <person name="Chissoe S.L."/>
            <person name="Marra M.A."/>
            <person name="Raymond C."/>
            <person name="Haugen E."/>
            <person name="Gillett W."/>
            <person name="Zhou Y."/>
            <person name="James R."/>
            <person name="Phelps K."/>
            <person name="Iadanoto S."/>
            <person name="Bubb K."/>
            <person name="Simms E."/>
            <person name="Levy R."/>
            <person name="Clendenning J."/>
            <person name="Kaul R."/>
            <person name="Kent W.J."/>
            <person name="Furey T.S."/>
            <person name="Baertsch R.A."/>
            <person name="Brent M.R."/>
            <person name="Keibler E."/>
            <person name="Flicek P."/>
            <person name="Bork P."/>
            <person name="Suyama M."/>
            <person name="Bailey J.A."/>
            <person name="Portnoy M.E."/>
            <person name="Torrents D."/>
            <person name="Chinwalla A.T."/>
            <person name="Gish W.R."/>
            <person name="Eddy S.R."/>
            <person name="McPherson J.D."/>
            <person name="Olson M.V."/>
            <person name="Eichler E.E."/>
            <person name="Green E.D."/>
            <person name="Waterston R.H."/>
            <person name="Wilson R.K."/>
        </authorList>
    </citation>
    <scope>NUCLEOTIDE SEQUENCE [LARGE SCALE GENOMIC DNA] (IMGT ALLELE TRBV5-5*01)</scope>
</reference>
<reference key="3">
    <citation type="book" date="2001" name="The T Cell Receptor FactsBook.">
        <title>The T Cell Receptor FactsBook.</title>
        <editorList>
            <person name="Lefranc M.P."/>
            <person name="Lefranc G."/>
        </editorList>
        <authorList>
            <person name="Lefranc M.P."/>
            <person name="Lefranc G."/>
        </authorList>
    </citation>
    <scope>NOMENCLATURE</scope>
</reference>
<reference key="4">
    <citation type="journal article" date="2004" name="Nat. Rev. Immunol.">
        <title>The many important facets of T-cell repertoire diversity.</title>
        <authorList>
            <person name="Nikolich-Zugich J."/>
            <person name="Slifka M.K."/>
            <person name="Messaoudi I."/>
        </authorList>
    </citation>
    <scope>REVIEW ON T CELL REPERTOIRE DIVERSITY</scope>
</reference>
<reference key="5">
    <citation type="journal article" date="2010" name="Cold Spring Harb. Perspect. Biol.">
        <title>Structural biology of the T-cell receptor: insights into receptor assembly, ligand recognition, and initiation of signaling.</title>
        <authorList>
            <person name="Wucherpfennig K.W."/>
            <person name="Gagnon E."/>
            <person name="Call M.J."/>
            <person name="Huseby E.S."/>
            <person name="Call M.E."/>
        </authorList>
    </citation>
    <scope>REVIEW ON T CELL RECEPTOR-CD3 COMPLEX ASSEMBLY</scope>
    <scope>SUBCELLULAR LOCATION</scope>
</reference>
<reference key="6">
    <citation type="journal article" date="2013" name="Nat. Rev. Immunol.">
        <title>T cell receptor signalling networks: branched, diversified and bounded.</title>
        <authorList>
            <person name="Brownlie R.J."/>
            <person name="Zamoyska R."/>
        </authorList>
    </citation>
    <scope>REVIEW ON T CELL RECEPTOR SIGNALING</scope>
</reference>
<reference key="7">
    <citation type="journal article" date="2014" name="Front. Immunol.">
        <title>Immunoglobulin and T Cell Receptor Genes: IMGT((R)) and the Birth and Rise of Immunoinformatics.</title>
        <authorList>
            <person name="Lefranc M.P."/>
        </authorList>
    </citation>
    <scope>NOMENCLATURE</scope>
</reference>
<reference key="8">
    <citation type="journal article" date="2015" name="Annu. Rev. Immunol.">
        <title>T cell antigen receptor recognition of antigen-presenting molecules.</title>
        <authorList>
            <person name="Rossjohn J."/>
            <person name="Gras S."/>
            <person name="Miles J.J."/>
            <person name="Turner S.J."/>
            <person name="Godfrey D.I."/>
            <person name="McCluskey J."/>
        </authorList>
    </citation>
    <scope>REVIEW ON FUNCTION</scope>
</reference>
<name>TVB55_HUMAN</name>
<dbReference type="EMBL" id="L36092">
    <property type="protein sequence ID" value="AAC13344.1"/>
    <property type="molecule type" value="Genomic_DNA"/>
</dbReference>
<dbReference type="EMBL" id="AC244196">
    <property type="status" value="NOT_ANNOTATED_CDS"/>
    <property type="molecule type" value="Genomic_DNA"/>
</dbReference>
<dbReference type="SMR" id="A0A597"/>
<dbReference type="FunCoup" id="A0A597">
    <property type="interactions" value="427"/>
</dbReference>
<dbReference type="IMGT_GENE-DB" id="TRBV5-5"/>
<dbReference type="GlyCosmos" id="A0A597">
    <property type="glycosylation" value="1 site, No reported glycans"/>
</dbReference>
<dbReference type="GlyGen" id="A0A597">
    <property type="glycosylation" value="1 site"/>
</dbReference>
<dbReference type="BioMuta" id="TRBV5-5"/>
<dbReference type="MassIVE" id="A0A597"/>
<dbReference type="Ensembl" id="ENST00000390372.3">
    <property type="protein sequence ID" value="ENSP00000374895.3"/>
    <property type="gene ID" value="ENSG00000211725.3"/>
</dbReference>
<dbReference type="UCSC" id="uc033aln.2">
    <property type="organism name" value="human"/>
</dbReference>
<dbReference type="AGR" id="HGNC:12222"/>
<dbReference type="GeneCards" id="TRBV5-5"/>
<dbReference type="HGNC" id="HGNC:12222">
    <property type="gene designation" value="TRBV5-5"/>
</dbReference>
<dbReference type="HPA" id="ENSG00000211725">
    <property type="expression patterns" value="Tissue enriched (lymphoid)"/>
</dbReference>
<dbReference type="neXtProt" id="NX_A0A597"/>
<dbReference type="VEuPathDB" id="HostDB:ENSG00000211725"/>
<dbReference type="GeneTree" id="ENSGT00940000154270"/>
<dbReference type="HOGENOM" id="CLU_077975_9_4_1"/>
<dbReference type="InParanoid" id="A0A597"/>
<dbReference type="OMA" id="IPISEHN"/>
<dbReference type="OrthoDB" id="9803478at2759"/>
<dbReference type="PAN-GO" id="A0A597">
    <property type="GO annotations" value="2 GO annotations based on evolutionary models"/>
</dbReference>
<dbReference type="ChiTaRS" id="TRBV5-5">
    <property type="organism name" value="human"/>
</dbReference>
<dbReference type="Pharos" id="A0A597">
    <property type="development level" value="Tdark"/>
</dbReference>
<dbReference type="PRO" id="PR:A0A597"/>
<dbReference type="Proteomes" id="UP000005640">
    <property type="component" value="Chromosome 7"/>
</dbReference>
<dbReference type="Bgee" id="ENSG00000211725">
    <property type="expression patterns" value="Expressed in granulocyte and 61 other cell types or tissues"/>
</dbReference>
<dbReference type="GO" id="GO:0005886">
    <property type="term" value="C:plasma membrane"/>
    <property type="evidence" value="ECO:0000318"/>
    <property type="project" value="GO_Central"/>
</dbReference>
<dbReference type="GO" id="GO:0042101">
    <property type="term" value="C:T cell receptor complex"/>
    <property type="evidence" value="ECO:0007669"/>
    <property type="project" value="UniProtKB-KW"/>
</dbReference>
<dbReference type="GO" id="GO:0002250">
    <property type="term" value="P:adaptive immune response"/>
    <property type="evidence" value="ECO:0007669"/>
    <property type="project" value="UniProtKB-KW"/>
</dbReference>
<dbReference type="GO" id="GO:0007166">
    <property type="term" value="P:cell surface receptor signaling pathway"/>
    <property type="evidence" value="ECO:0000318"/>
    <property type="project" value="GO_Central"/>
</dbReference>
<dbReference type="Gene3D" id="2.60.40.10">
    <property type="entry name" value="Immunoglobulins"/>
    <property type="match status" value="1"/>
</dbReference>
<dbReference type="InterPro" id="IPR007110">
    <property type="entry name" value="Ig-like_dom"/>
</dbReference>
<dbReference type="InterPro" id="IPR036179">
    <property type="entry name" value="Ig-like_dom_sf"/>
</dbReference>
<dbReference type="InterPro" id="IPR013783">
    <property type="entry name" value="Ig-like_fold"/>
</dbReference>
<dbReference type="InterPro" id="IPR013106">
    <property type="entry name" value="Ig_V-set"/>
</dbReference>
<dbReference type="InterPro" id="IPR050413">
    <property type="entry name" value="TCR_beta_variable"/>
</dbReference>
<dbReference type="PANTHER" id="PTHR23268:SF6">
    <property type="entry name" value="T CELL RECEPTOR BETA VARIABLE 5-5-RELATED"/>
    <property type="match status" value="1"/>
</dbReference>
<dbReference type="PANTHER" id="PTHR23268">
    <property type="entry name" value="T-CELL RECEPTOR BETA CHAIN"/>
    <property type="match status" value="1"/>
</dbReference>
<dbReference type="Pfam" id="PF07686">
    <property type="entry name" value="V-set"/>
    <property type="match status" value="1"/>
</dbReference>
<dbReference type="SUPFAM" id="SSF48726">
    <property type="entry name" value="Immunoglobulin"/>
    <property type="match status" value="1"/>
</dbReference>
<dbReference type="PROSITE" id="PS50835">
    <property type="entry name" value="IG_LIKE"/>
    <property type="match status" value="1"/>
</dbReference>
<proteinExistence type="inferred from homology"/>
<comment type="function">
    <text evidence="3 5 6 7">V region of the variable domain of T cell receptor (TR) beta chain that participates in the antigen recognition (PubMed:24600447). Alpha-beta T cell receptors are antigen specific receptors which are essential to the immune response and are present on the cell surface of T lymphocytes. Recognize peptide-major histocompatibility (MH) (pMH) complexes that are displayed by antigen presenting cells (APC), a prerequisite for efficient T cell adaptive immunity against pathogens (PubMed:25493333). Binding of alpha-beta TR to pMH complex initiates TR-CD3 clustering on the cell surface and intracellular activation of LCK that phosphorylates the ITAM motifs of CD3G, CD3D, CD3E and CD247 enabling the recruitment of ZAP70. In turn ZAP70 phosphorylates LAT, which recruits numerous signaling molecules to form the LAT signalosome. The LAT signalosome propagates signal branching to three major signaling pathways, the calcium, the mitogen-activated protein kinase (MAPK) kinase and the nuclear factor NF-kappa-B (NF-kB) pathways, leading to the mobilization of transcription factors that are critical for gene expression and essential for T cell growth and differentiation (PubMed:23524462). The T cell repertoire is generated in the thymus, by V-(D)-J rearrangement. This repertoire is then shaped by intrathymic selection events to generate a peripheral T cell pool of self-MH restricted, non-autoaggressive T cells. Post-thymic interaction of alpha-beta TR with the pMH complexes shapes TR structural and functional avidity (PubMed:15040585).</text>
</comment>
<comment type="subunit">
    <text evidence="4">Alpha-beta TR is a heterodimer composed of an alpha and beta chain; disulfide-linked. The alpha-beta TR is associated with the transmembrane signaling CD3 coreceptor proteins to form the TR-CD3 (TcR or TCR). The assembly of alpha-beta TR heterodimers with CD3 occurs in the endoplasmic reticulum where a single alpha-beta TR heterodimer associates with one CD3D-CD3E heterodimer, one CD3G-CD3E heterodimer and one CD247 homodimer forming a stable octameric structure. CD3D-CD3E and CD3G-CD3E heterodimers preferentially associate with TR alpha and TR beta chains, respectively. The association of the CD247 homodimer is the last step of TcR assembly in the endoplasmic reticulum and is required for transport to the cell surface.</text>
</comment>
<comment type="subcellular location">
    <subcellularLocation>
        <location evidence="4">Cell membrane</location>
    </subcellularLocation>
</comment>
<comment type="polymorphism">
    <text evidence="10">There are several alleles. The sequence shown is that of IMGT allele TRBV5-5*01.</text>
</comment>